<accession>Q9ZCA0</accession>
<name>Y866_RICPR</name>
<organism>
    <name type="scientific">Rickettsia prowazekii (strain Madrid E)</name>
    <dbReference type="NCBI Taxonomy" id="272947"/>
    <lineage>
        <taxon>Bacteria</taxon>
        <taxon>Pseudomonadati</taxon>
        <taxon>Pseudomonadota</taxon>
        <taxon>Alphaproteobacteria</taxon>
        <taxon>Rickettsiales</taxon>
        <taxon>Rickettsiaceae</taxon>
        <taxon>Rickettsieae</taxon>
        <taxon>Rickettsia</taxon>
        <taxon>typhus group</taxon>
    </lineage>
</organism>
<reference key="1">
    <citation type="journal article" date="1998" name="Nature">
        <title>The genome sequence of Rickettsia prowazekii and the origin of mitochondria.</title>
        <authorList>
            <person name="Andersson S.G.E."/>
            <person name="Zomorodipour A."/>
            <person name="Andersson J.O."/>
            <person name="Sicheritz-Ponten T."/>
            <person name="Alsmark U.C.M."/>
            <person name="Podowski R.M."/>
            <person name="Naeslund A.K."/>
            <person name="Eriksson A.-S."/>
            <person name="Winkler H.H."/>
            <person name="Kurland C.G."/>
        </authorList>
    </citation>
    <scope>NUCLEOTIDE SEQUENCE [LARGE SCALE GENOMIC DNA]</scope>
    <source>
        <strain>Madrid E</strain>
    </source>
</reference>
<evidence type="ECO:0000255" key="1">
    <source>
        <dbReference type="HAMAP-Rule" id="MF_00274"/>
    </source>
</evidence>
<keyword id="KW-0963">Cytoplasm</keyword>
<keyword id="KW-0238">DNA-binding</keyword>
<keyword id="KW-1185">Reference proteome</keyword>
<comment type="function">
    <text evidence="1">Binds to DNA and alters its conformation. May be involved in regulation of gene expression, nucleoid organization and DNA protection.</text>
</comment>
<comment type="subunit">
    <text evidence="1">Homodimer.</text>
</comment>
<comment type="subcellular location">
    <subcellularLocation>
        <location evidence="1">Cytoplasm</location>
        <location evidence="1">Nucleoid</location>
    </subcellularLocation>
</comment>
<comment type="similarity">
    <text evidence="1">Belongs to the YbaB/EbfC family.</text>
</comment>
<proteinExistence type="inferred from homology"/>
<gene>
    <name type="ordered locus">RP866</name>
</gene>
<feature type="chain" id="PRO_0000170430" description="Nucleoid-associated protein RP866">
    <location>
        <begin position="1"/>
        <end position="107"/>
    </location>
</feature>
<protein>
    <recommendedName>
        <fullName evidence="1">Nucleoid-associated protein RP866</fullName>
    </recommendedName>
</protein>
<sequence length="107" mass="11933">MVNFNQFLKQAQSMQKKMQEAQEQMANTRYTGKAGGMLVEIIITGKGEVEKISIDESLLKTEEKEMLEDLIKVAFNDAKQKCDEDSQNSLSGALNGMSLPPGFKIPF</sequence>
<dbReference type="EMBL" id="AJ235273">
    <property type="protein sequence ID" value="CAA15290.1"/>
    <property type="molecule type" value="Genomic_DNA"/>
</dbReference>
<dbReference type="PIR" id="B71649">
    <property type="entry name" value="B71649"/>
</dbReference>
<dbReference type="RefSeq" id="NP_221214.1">
    <property type="nucleotide sequence ID" value="NC_000963.1"/>
</dbReference>
<dbReference type="RefSeq" id="WP_004596750.1">
    <property type="nucleotide sequence ID" value="NC_000963.1"/>
</dbReference>
<dbReference type="SMR" id="Q9ZCA0"/>
<dbReference type="STRING" id="272947.gene:17555935"/>
<dbReference type="EnsemblBacteria" id="CAA15290">
    <property type="protein sequence ID" value="CAA15290"/>
    <property type="gene ID" value="CAA15290"/>
</dbReference>
<dbReference type="KEGG" id="rpr:RP866"/>
<dbReference type="PATRIC" id="fig|272947.5.peg.905"/>
<dbReference type="eggNOG" id="COG0718">
    <property type="taxonomic scope" value="Bacteria"/>
</dbReference>
<dbReference type="HOGENOM" id="CLU_140930_0_0_5"/>
<dbReference type="OrthoDB" id="9803080at2"/>
<dbReference type="Proteomes" id="UP000002480">
    <property type="component" value="Chromosome"/>
</dbReference>
<dbReference type="GO" id="GO:0043590">
    <property type="term" value="C:bacterial nucleoid"/>
    <property type="evidence" value="ECO:0007669"/>
    <property type="project" value="UniProtKB-UniRule"/>
</dbReference>
<dbReference type="GO" id="GO:0005829">
    <property type="term" value="C:cytosol"/>
    <property type="evidence" value="ECO:0007669"/>
    <property type="project" value="TreeGrafter"/>
</dbReference>
<dbReference type="GO" id="GO:0003677">
    <property type="term" value="F:DNA binding"/>
    <property type="evidence" value="ECO:0007669"/>
    <property type="project" value="UniProtKB-UniRule"/>
</dbReference>
<dbReference type="Gene3D" id="3.30.1310.10">
    <property type="entry name" value="Nucleoid-associated protein YbaB-like domain"/>
    <property type="match status" value="1"/>
</dbReference>
<dbReference type="HAMAP" id="MF_00274">
    <property type="entry name" value="DNA_YbaB_EbfC"/>
    <property type="match status" value="1"/>
</dbReference>
<dbReference type="InterPro" id="IPR036894">
    <property type="entry name" value="YbaB-like_sf"/>
</dbReference>
<dbReference type="InterPro" id="IPR004401">
    <property type="entry name" value="YbaB/EbfC"/>
</dbReference>
<dbReference type="NCBIfam" id="TIGR00103">
    <property type="entry name" value="DNA_YbaB_EbfC"/>
    <property type="match status" value="1"/>
</dbReference>
<dbReference type="PANTHER" id="PTHR33449">
    <property type="entry name" value="NUCLEOID-ASSOCIATED PROTEIN YBAB"/>
    <property type="match status" value="1"/>
</dbReference>
<dbReference type="PANTHER" id="PTHR33449:SF1">
    <property type="entry name" value="NUCLEOID-ASSOCIATED PROTEIN YBAB"/>
    <property type="match status" value="1"/>
</dbReference>
<dbReference type="Pfam" id="PF02575">
    <property type="entry name" value="YbaB_DNA_bd"/>
    <property type="match status" value="1"/>
</dbReference>
<dbReference type="PIRSF" id="PIRSF004555">
    <property type="entry name" value="UCP004555"/>
    <property type="match status" value="1"/>
</dbReference>
<dbReference type="SUPFAM" id="SSF82607">
    <property type="entry name" value="YbaB-like"/>
    <property type="match status" value="1"/>
</dbReference>